<dbReference type="EMBL" id="AE005174">
    <property type="protein sequence ID" value="AAG57152.1"/>
    <property type="molecule type" value="Genomic_DNA"/>
</dbReference>
<dbReference type="EMBL" id="BA000007">
    <property type="protein sequence ID" value="BAB36321.1"/>
    <property type="molecule type" value="Genomic_DNA"/>
</dbReference>
<dbReference type="PIR" id="B90991">
    <property type="entry name" value="B90991"/>
</dbReference>
<dbReference type="PIR" id="D85836">
    <property type="entry name" value="D85836"/>
</dbReference>
<dbReference type="RefSeq" id="NP_310925.1">
    <property type="nucleotide sequence ID" value="NC_002695.1"/>
</dbReference>
<dbReference type="RefSeq" id="WP_000853846.1">
    <property type="nucleotide sequence ID" value="NZ_VOAI01000013.1"/>
</dbReference>
<dbReference type="PDB" id="2FIQ">
    <property type="method" value="X-ray"/>
    <property type="resolution" value="2.25 A"/>
    <property type="chains" value="A/B/C/D=1-420"/>
</dbReference>
<dbReference type="PDBsum" id="2FIQ"/>
<dbReference type="SMR" id="Q8X7H4"/>
<dbReference type="STRING" id="155864.Z3258"/>
<dbReference type="DNASU" id="916601"/>
<dbReference type="GeneID" id="916601"/>
<dbReference type="KEGG" id="ece:Z3258"/>
<dbReference type="KEGG" id="ecs:ECs_2898"/>
<dbReference type="PATRIC" id="fig|386585.9.peg.3030"/>
<dbReference type="eggNOG" id="COG4573">
    <property type="taxonomic scope" value="Bacteria"/>
</dbReference>
<dbReference type="HOGENOM" id="CLU_053334_0_0_6"/>
<dbReference type="OMA" id="AINAVHV"/>
<dbReference type="UniPathway" id="UPA00704">
    <property type="reaction ID" value="UER00716"/>
</dbReference>
<dbReference type="EvolutionaryTrace" id="Q8X7H4"/>
<dbReference type="Proteomes" id="UP000000558">
    <property type="component" value="Chromosome"/>
</dbReference>
<dbReference type="Proteomes" id="UP000002519">
    <property type="component" value="Chromosome"/>
</dbReference>
<dbReference type="GO" id="GO:0005886">
    <property type="term" value="C:plasma membrane"/>
    <property type="evidence" value="ECO:0007669"/>
    <property type="project" value="TreeGrafter"/>
</dbReference>
<dbReference type="GO" id="GO:2001059">
    <property type="term" value="P:D-tagatose 6-phosphate catabolic process"/>
    <property type="evidence" value="ECO:0007669"/>
    <property type="project" value="UniProtKB-UniRule"/>
</dbReference>
<dbReference type="GO" id="GO:0019402">
    <property type="term" value="P:galactitol metabolic process"/>
    <property type="evidence" value="ECO:0007669"/>
    <property type="project" value="UniProtKB-KW"/>
</dbReference>
<dbReference type="GO" id="GO:0009401">
    <property type="term" value="P:phosphoenolpyruvate-dependent sugar phosphotransferase system"/>
    <property type="evidence" value="ECO:0007669"/>
    <property type="project" value="TreeGrafter"/>
</dbReference>
<dbReference type="FunFam" id="3.20.20.70:FF:000141">
    <property type="entry name" value="D-tagatose-1,6-bisphosphate aldolase subunit GatZ"/>
    <property type="match status" value="1"/>
</dbReference>
<dbReference type="Gene3D" id="3.20.20.70">
    <property type="entry name" value="Aldolase class I"/>
    <property type="match status" value="1"/>
</dbReference>
<dbReference type="Gene3D" id="1.10.400.20">
    <property type="entry name" value="putative tagatose 6-phosphate kinase domain like"/>
    <property type="match status" value="1"/>
</dbReference>
<dbReference type="HAMAP" id="MF_01296">
    <property type="entry name" value="Tagatose_aldol_GatZ"/>
    <property type="match status" value="1"/>
</dbReference>
<dbReference type="InterPro" id="IPR013785">
    <property type="entry name" value="Aldolase_TIM"/>
</dbReference>
<dbReference type="InterPro" id="IPR012062">
    <property type="entry name" value="GatZ/KbaZ-like"/>
</dbReference>
<dbReference type="InterPro" id="IPR050303">
    <property type="entry name" value="GatZ_KbaZ_carbometab"/>
</dbReference>
<dbReference type="InterPro" id="IPR023436">
    <property type="entry name" value="TagBP_ald_GatZ"/>
</dbReference>
<dbReference type="NCBIfam" id="TIGR02810">
    <property type="entry name" value="agaZ_gatZ"/>
    <property type="match status" value="1"/>
</dbReference>
<dbReference type="NCBIfam" id="NF011626">
    <property type="entry name" value="PRK15052.1"/>
    <property type="match status" value="1"/>
</dbReference>
<dbReference type="PANTHER" id="PTHR32502:SF12">
    <property type="entry name" value="D-TAGATOSE-1,6-BISPHOSPHATE ALDOLASE SUBUNIT GATZ"/>
    <property type="match status" value="1"/>
</dbReference>
<dbReference type="PANTHER" id="PTHR32502">
    <property type="entry name" value="N-ACETYLGALACTOSAMINE PERMEASE II COMPONENT-RELATED"/>
    <property type="match status" value="1"/>
</dbReference>
<dbReference type="Pfam" id="PF08013">
    <property type="entry name" value="GatZ_KbaZ-like"/>
    <property type="match status" value="1"/>
</dbReference>
<dbReference type="PIRSF" id="PIRSF009264">
    <property type="entry name" value="TagBP_ald_AgaZ"/>
    <property type="match status" value="1"/>
</dbReference>
<dbReference type="SUPFAM" id="SSF51569">
    <property type="entry name" value="Aldolase"/>
    <property type="match status" value="1"/>
</dbReference>
<feature type="chain" id="PRO_0000355359" description="D-tagatose-1,6-bisphosphate aldolase subunit GatZ">
    <location>
        <begin position="1"/>
        <end position="420"/>
    </location>
</feature>
<feature type="helix" evidence="3">
    <location>
        <begin position="2"/>
        <end position="9"/>
    </location>
</feature>
<feature type="strand" evidence="3">
    <location>
        <begin position="16"/>
        <end position="19"/>
    </location>
</feature>
<feature type="helix" evidence="3">
    <location>
        <begin position="24"/>
        <end position="33"/>
    </location>
</feature>
<feature type="turn" evidence="3">
    <location>
        <begin position="34"/>
        <end position="36"/>
    </location>
</feature>
<feature type="strand" evidence="3">
    <location>
        <begin position="41"/>
        <end position="46"/>
    </location>
</feature>
<feature type="turn" evidence="3">
    <location>
        <begin position="47"/>
        <end position="49"/>
    </location>
</feature>
<feature type="turn" evidence="3">
    <location>
        <begin position="55"/>
        <end position="58"/>
    </location>
</feature>
<feature type="helix" evidence="3">
    <location>
        <begin position="61"/>
        <end position="75"/>
    </location>
</feature>
<feature type="helix" evidence="3">
    <location>
        <begin position="79"/>
        <end position="81"/>
    </location>
</feature>
<feature type="strand" evidence="3">
    <location>
        <begin position="82"/>
        <end position="91"/>
    </location>
</feature>
<feature type="helix" evidence="3">
    <location>
        <begin position="92"/>
        <end position="94"/>
    </location>
</feature>
<feature type="helix" evidence="3">
    <location>
        <begin position="99"/>
        <end position="115"/>
    </location>
</feature>
<feature type="strand" evidence="3">
    <location>
        <begin position="120"/>
        <end position="123"/>
    </location>
</feature>
<feature type="helix" evidence="3">
    <location>
        <begin position="138"/>
        <end position="155"/>
    </location>
</feature>
<feature type="helix" evidence="3">
    <location>
        <begin position="158"/>
        <end position="163"/>
    </location>
</feature>
<feature type="strand" evidence="3">
    <location>
        <begin position="165"/>
        <end position="169"/>
    </location>
</feature>
<feature type="helix" evidence="3">
    <location>
        <begin position="190"/>
        <end position="205"/>
    </location>
</feature>
<feature type="turn" evidence="3">
    <location>
        <begin position="206"/>
        <end position="208"/>
    </location>
</feature>
<feature type="helix" evidence="3">
    <location>
        <begin position="210"/>
        <end position="214"/>
    </location>
</feature>
<feature type="strand" evidence="3">
    <location>
        <begin position="216"/>
        <end position="220"/>
    </location>
</feature>
<feature type="helix" evidence="3">
    <location>
        <begin position="237"/>
        <end position="240"/>
    </location>
</feature>
<feature type="helix" evidence="3">
    <location>
        <begin position="241"/>
        <end position="247"/>
    </location>
</feature>
<feature type="strand" evidence="3">
    <location>
        <begin position="253"/>
        <end position="257"/>
    </location>
</feature>
<feature type="helix" evidence="3">
    <location>
        <begin position="264"/>
        <end position="272"/>
    </location>
</feature>
<feature type="strand" evidence="3">
    <location>
        <begin position="275"/>
        <end position="280"/>
    </location>
</feature>
<feature type="helix" evidence="3">
    <location>
        <begin position="282"/>
        <end position="302"/>
    </location>
</feature>
<feature type="turn" evidence="3">
    <location>
        <begin position="305"/>
        <end position="307"/>
    </location>
</feature>
<feature type="helix" evidence="3">
    <location>
        <begin position="311"/>
        <end position="321"/>
    </location>
</feature>
<feature type="helix" evidence="3">
    <location>
        <begin position="323"/>
        <end position="325"/>
    </location>
</feature>
<feature type="turn" evidence="3">
    <location>
        <begin position="326"/>
        <end position="329"/>
    </location>
</feature>
<feature type="helix" evidence="3">
    <location>
        <begin position="334"/>
        <end position="343"/>
    </location>
</feature>
<feature type="helix" evidence="3">
    <location>
        <begin position="348"/>
        <end position="351"/>
    </location>
</feature>
<feature type="turn" evidence="3">
    <location>
        <begin position="352"/>
        <end position="354"/>
    </location>
</feature>
<feature type="helix" evidence="3">
    <location>
        <begin position="356"/>
        <end position="370"/>
    </location>
</feature>
<feature type="helix" evidence="3">
    <location>
        <begin position="376"/>
        <end position="382"/>
    </location>
</feature>
<feature type="helix" evidence="3">
    <location>
        <begin position="384"/>
        <end position="391"/>
    </location>
</feature>
<feature type="helix" evidence="3">
    <location>
        <begin position="399"/>
        <end position="418"/>
    </location>
</feature>
<name>GATZ_ECO57</name>
<accession>Q8X7H4</accession>
<accession>Q7ACL2</accession>
<keyword id="KW-0002">3D-structure</keyword>
<keyword id="KW-0298">Galactitol metabolism</keyword>
<keyword id="KW-1185">Reference proteome</keyword>
<evidence type="ECO:0000250" key="1"/>
<evidence type="ECO:0000305" key="2"/>
<evidence type="ECO:0007829" key="3">
    <source>
        <dbReference type="PDB" id="2FIQ"/>
    </source>
</evidence>
<reference key="1">
    <citation type="journal article" date="2001" name="Nature">
        <title>Genome sequence of enterohaemorrhagic Escherichia coli O157:H7.</title>
        <authorList>
            <person name="Perna N.T."/>
            <person name="Plunkett G. III"/>
            <person name="Burland V."/>
            <person name="Mau B."/>
            <person name="Glasner J.D."/>
            <person name="Rose D.J."/>
            <person name="Mayhew G.F."/>
            <person name="Evans P.S."/>
            <person name="Gregor J."/>
            <person name="Kirkpatrick H.A."/>
            <person name="Posfai G."/>
            <person name="Hackett J."/>
            <person name="Klink S."/>
            <person name="Boutin A."/>
            <person name="Shao Y."/>
            <person name="Miller L."/>
            <person name="Grotbeck E.J."/>
            <person name="Davis N.W."/>
            <person name="Lim A."/>
            <person name="Dimalanta E.T."/>
            <person name="Potamousis K."/>
            <person name="Apodaca J."/>
            <person name="Anantharaman T.S."/>
            <person name="Lin J."/>
            <person name="Yen G."/>
            <person name="Schwartz D.C."/>
            <person name="Welch R.A."/>
            <person name="Blattner F.R."/>
        </authorList>
    </citation>
    <scope>NUCLEOTIDE SEQUENCE [LARGE SCALE GENOMIC DNA]</scope>
    <source>
        <strain>O157:H7 / EDL933 / ATCC 700927 / EHEC</strain>
    </source>
</reference>
<reference key="2">
    <citation type="journal article" date="2001" name="DNA Res.">
        <title>Complete genome sequence of enterohemorrhagic Escherichia coli O157:H7 and genomic comparison with a laboratory strain K-12.</title>
        <authorList>
            <person name="Hayashi T."/>
            <person name="Makino K."/>
            <person name="Ohnishi M."/>
            <person name="Kurokawa K."/>
            <person name="Ishii K."/>
            <person name="Yokoyama K."/>
            <person name="Han C.-G."/>
            <person name="Ohtsubo E."/>
            <person name="Nakayama K."/>
            <person name="Murata T."/>
            <person name="Tanaka M."/>
            <person name="Tobe T."/>
            <person name="Iida T."/>
            <person name="Takami H."/>
            <person name="Honda T."/>
            <person name="Sasakawa C."/>
            <person name="Ogasawara N."/>
            <person name="Yasunaga T."/>
            <person name="Kuhara S."/>
            <person name="Shiba T."/>
            <person name="Hattori M."/>
            <person name="Shinagawa H."/>
        </authorList>
    </citation>
    <scope>NUCLEOTIDE SEQUENCE [LARGE SCALE GENOMIC DNA]</scope>
    <source>
        <strain>O157:H7 / Sakai / RIMD 0509952 / EHEC</strain>
    </source>
</reference>
<reference key="3">
    <citation type="submission" date="2006-04" db="PDB data bank">
        <title>Crystal structure of putative tagatose 6-phosphate kinase.</title>
        <authorList>
            <consortium name="New York structural genomix research consortium (NYSGXRC)"/>
        </authorList>
    </citation>
    <scope>X-RAY CRYSTALLOGRAPHY (2.25 ANGSTROMS)</scope>
</reference>
<comment type="function">
    <text evidence="1">Component of the tagatose-1,6-bisphosphate aldolase GatYZ that is required for full activity and stability of the Y subunit. Could have a chaperone-like function for the proper and stable folding of GatY. When expressed alone, GatZ does not show any aldolase activity. Is involved in the catabolism of galactitol (By similarity).</text>
</comment>
<comment type="pathway">
    <text>Carbohydrate metabolism; D-tagatose 6-phosphate degradation; D-glyceraldehyde 3-phosphate and glycerone phosphate from D-tagatose 6-phosphate: step 2/2.</text>
</comment>
<comment type="subunit">
    <text evidence="1">Forms a complex with GatY.</text>
</comment>
<comment type="similarity">
    <text evidence="2">Belongs to the GatZ/KbaZ family. GatZ subfamily.</text>
</comment>
<proteinExistence type="evidence at protein level"/>
<organism>
    <name type="scientific">Escherichia coli O157:H7</name>
    <dbReference type="NCBI Taxonomy" id="83334"/>
    <lineage>
        <taxon>Bacteria</taxon>
        <taxon>Pseudomonadati</taxon>
        <taxon>Pseudomonadota</taxon>
        <taxon>Gammaproteobacteria</taxon>
        <taxon>Enterobacterales</taxon>
        <taxon>Enterobacteriaceae</taxon>
        <taxon>Escherichia</taxon>
    </lineage>
</organism>
<gene>
    <name type="primary">gatZ</name>
    <name type="ordered locus">Z3258</name>
    <name type="ordered locus">ECs2898</name>
</gene>
<sequence>MKTLIARHKAGEHIGICSVCSAHPLVIEAALAFDRNSTRKVLIEATSNQVNQFGGYTGMTPADFREFVFAIADKVGFARERIILGGDHLGPNCWQQENVDAAMEKSVELVKAYVRAGFSKIHLDASMSCAGDPIPLAPETVAERAAVLCFAAESVATDCQREQLSYVIGTEVPVPGGEASAIQSVHITHVEDAANTLRTHQKAFIARGLTEALTRVIAIVVQPGVEFDHSNIIHYQPQEAQALAQWIENTRMVYEAHSTDYQTRTAYWELVRDHFAILKVGPALTFALREAIFALAQIEQELIAPENRSGCLAVIEEVMLDEPQYWKKYYRTGFNDSLLDIRYSLSDRIRYYWPHSRIKNSVETMMVNLQGVDIPLGMISQYLPKQFERIQSGELSAIPHQLIMDKIYDVLRAYRYGCAE</sequence>
<protein>
    <recommendedName>
        <fullName>D-tagatose-1,6-bisphosphate aldolase subunit GatZ</fullName>
    </recommendedName>
</protein>